<feature type="chain" id="PRO_0000288093" description="Homologous recombination OB-fold protein">
    <location>
        <begin position="1"/>
        <end position="615"/>
    </location>
</feature>
<feature type="region of interest" description="Disordered" evidence="2">
    <location>
        <begin position="42"/>
        <end position="75"/>
    </location>
</feature>
<feature type="region of interest" description="Disordered" evidence="2">
    <location>
        <begin position="213"/>
        <end position="326"/>
    </location>
</feature>
<feature type="region of interest" description="Disordered" evidence="2">
    <location>
        <begin position="546"/>
        <end position="590"/>
    </location>
</feature>
<feature type="compositionally biased region" description="Polar residues" evidence="2">
    <location>
        <begin position="47"/>
        <end position="71"/>
    </location>
</feature>
<feature type="compositionally biased region" description="Polar residues" evidence="2">
    <location>
        <begin position="232"/>
        <end position="241"/>
    </location>
</feature>
<feature type="compositionally biased region" description="Polar residues" evidence="2">
    <location>
        <begin position="257"/>
        <end position="275"/>
    </location>
</feature>
<feature type="compositionally biased region" description="Low complexity" evidence="2">
    <location>
        <begin position="302"/>
        <end position="317"/>
    </location>
</feature>
<feature type="modified residue" description="Phosphoserine" evidence="1">
    <location>
        <position position="47"/>
    </location>
</feature>
<feature type="splice variant" id="VSP_025656" description="In isoform 2." evidence="4">
    <original>DDLDGLLSELPEDFFCEPSS</original>
    <variation>GGRPAMTPV</variation>
    <location>
        <begin position="596"/>
        <end position="615"/>
    </location>
</feature>
<feature type="sequence conflict" description="In Ref. 3; AAI08339." evidence="6" ref="3">
    <original>F</original>
    <variation>L</variation>
    <location>
        <position position="118"/>
    </location>
</feature>
<feature type="sequence conflict" description="In Ref. 3; AAI08339." evidence="6" ref="3">
    <original>E</original>
    <variation>G</variation>
    <location>
        <position position="205"/>
    </location>
</feature>
<sequence length="615" mass="66063">MTCGFQKLFSVEEDFEDEDFLSALENAENHVVSALPRDAGCLRPVSSRPQETVQTQSSRPVPSYPTSNQSVPRLCLPPSSMRENAKAPLSTGVMSLRPASISSSSLSSQQRMTGAKVFQESSGPQPSAAHSGYIFESHQQGIGDFEAPDQDDLDKALASMEFEGAGLELEADSGATQILPAKHCEDPVLAKKARVADLSGSLRKEPMVHCRNPWPSLRPTSATGSLPVPATSCVSTSQQRGSPAPAPQYLPVAGRTIRSSPQNYGPGQPLQSPRAWSSGKPRFSGPQRPHGSSAAFCQGPLSSRAPVSSVESPVSTPRNTSTPVTQPALQTPVVTNHLVQLVTATNRTPQQPSRPSIRAKTRRFPGPAGLLPHQHSGENLEEIMVSTPQTPTHGALAKFQTEIATSSQGSVEEDFGQGPWLTMKSALGLDEGDPTCFLYTYSIVMVLRKAALKQLPRNKVPNMAVMIKSLTRSTMDASVVFKDPTGEMLGTVHRVLLETHQSELRPGSVLLLKQIGVFSPSLRNHYLNVTPNNLVHIYSLDSGDGDFLEPPQPLPKDLGNSHGSLQPDVAAEPTRGLRTAQNPAVAFPEEELSEADDLDGLLSELPEDFFCEPSS</sequence>
<proteinExistence type="evidence at protein level"/>
<protein>
    <recommendedName>
        <fullName evidence="5">Homologous recombination OB-fold protein</fullName>
    </recommendedName>
</protein>
<reference key="1">
    <citation type="journal article" date="2005" name="Science">
        <title>The transcriptional landscape of the mammalian genome.</title>
        <authorList>
            <person name="Carninci P."/>
            <person name="Kasukawa T."/>
            <person name="Katayama S."/>
            <person name="Gough J."/>
            <person name="Frith M.C."/>
            <person name="Maeda N."/>
            <person name="Oyama R."/>
            <person name="Ravasi T."/>
            <person name="Lenhard B."/>
            <person name="Wells C."/>
            <person name="Kodzius R."/>
            <person name="Shimokawa K."/>
            <person name="Bajic V.B."/>
            <person name="Brenner S.E."/>
            <person name="Batalov S."/>
            <person name="Forrest A.R."/>
            <person name="Zavolan M."/>
            <person name="Davis M.J."/>
            <person name="Wilming L.G."/>
            <person name="Aidinis V."/>
            <person name="Allen J.E."/>
            <person name="Ambesi-Impiombato A."/>
            <person name="Apweiler R."/>
            <person name="Aturaliya R.N."/>
            <person name="Bailey T.L."/>
            <person name="Bansal M."/>
            <person name="Baxter L."/>
            <person name="Beisel K.W."/>
            <person name="Bersano T."/>
            <person name="Bono H."/>
            <person name="Chalk A.M."/>
            <person name="Chiu K.P."/>
            <person name="Choudhary V."/>
            <person name="Christoffels A."/>
            <person name="Clutterbuck D.R."/>
            <person name="Crowe M.L."/>
            <person name="Dalla E."/>
            <person name="Dalrymple B.P."/>
            <person name="de Bono B."/>
            <person name="Della Gatta G."/>
            <person name="di Bernardo D."/>
            <person name="Down T."/>
            <person name="Engstrom P."/>
            <person name="Fagiolini M."/>
            <person name="Faulkner G."/>
            <person name="Fletcher C.F."/>
            <person name="Fukushima T."/>
            <person name="Furuno M."/>
            <person name="Futaki S."/>
            <person name="Gariboldi M."/>
            <person name="Georgii-Hemming P."/>
            <person name="Gingeras T.R."/>
            <person name="Gojobori T."/>
            <person name="Green R.E."/>
            <person name="Gustincich S."/>
            <person name="Harbers M."/>
            <person name="Hayashi Y."/>
            <person name="Hensch T.K."/>
            <person name="Hirokawa N."/>
            <person name="Hill D."/>
            <person name="Huminiecki L."/>
            <person name="Iacono M."/>
            <person name="Ikeo K."/>
            <person name="Iwama A."/>
            <person name="Ishikawa T."/>
            <person name="Jakt M."/>
            <person name="Kanapin A."/>
            <person name="Katoh M."/>
            <person name="Kawasawa Y."/>
            <person name="Kelso J."/>
            <person name="Kitamura H."/>
            <person name="Kitano H."/>
            <person name="Kollias G."/>
            <person name="Krishnan S.P."/>
            <person name="Kruger A."/>
            <person name="Kummerfeld S.K."/>
            <person name="Kurochkin I.V."/>
            <person name="Lareau L.F."/>
            <person name="Lazarevic D."/>
            <person name="Lipovich L."/>
            <person name="Liu J."/>
            <person name="Liuni S."/>
            <person name="McWilliam S."/>
            <person name="Madan Babu M."/>
            <person name="Madera M."/>
            <person name="Marchionni L."/>
            <person name="Matsuda H."/>
            <person name="Matsuzawa S."/>
            <person name="Miki H."/>
            <person name="Mignone F."/>
            <person name="Miyake S."/>
            <person name="Morris K."/>
            <person name="Mottagui-Tabar S."/>
            <person name="Mulder N."/>
            <person name="Nakano N."/>
            <person name="Nakauchi H."/>
            <person name="Ng P."/>
            <person name="Nilsson R."/>
            <person name="Nishiguchi S."/>
            <person name="Nishikawa S."/>
            <person name="Nori F."/>
            <person name="Ohara O."/>
            <person name="Okazaki Y."/>
            <person name="Orlando V."/>
            <person name="Pang K.C."/>
            <person name="Pavan W.J."/>
            <person name="Pavesi G."/>
            <person name="Pesole G."/>
            <person name="Petrovsky N."/>
            <person name="Piazza S."/>
            <person name="Reed J."/>
            <person name="Reid J.F."/>
            <person name="Ring B.Z."/>
            <person name="Ringwald M."/>
            <person name="Rost B."/>
            <person name="Ruan Y."/>
            <person name="Salzberg S.L."/>
            <person name="Sandelin A."/>
            <person name="Schneider C."/>
            <person name="Schoenbach C."/>
            <person name="Sekiguchi K."/>
            <person name="Semple C.A."/>
            <person name="Seno S."/>
            <person name="Sessa L."/>
            <person name="Sheng Y."/>
            <person name="Shibata Y."/>
            <person name="Shimada H."/>
            <person name="Shimada K."/>
            <person name="Silva D."/>
            <person name="Sinclair B."/>
            <person name="Sperling S."/>
            <person name="Stupka E."/>
            <person name="Sugiura K."/>
            <person name="Sultana R."/>
            <person name="Takenaka Y."/>
            <person name="Taki K."/>
            <person name="Tammoja K."/>
            <person name="Tan S.L."/>
            <person name="Tang S."/>
            <person name="Taylor M.S."/>
            <person name="Tegner J."/>
            <person name="Teichmann S.A."/>
            <person name="Ueda H.R."/>
            <person name="van Nimwegen E."/>
            <person name="Verardo R."/>
            <person name="Wei C.L."/>
            <person name="Yagi K."/>
            <person name="Yamanishi H."/>
            <person name="Zabarovsky E."/>
            <person name="Zhu S."/>
            <person name="Zimmer A."/>
            <person name="Hide W."/>
            <person name="Bult C."/>
            <person name="Grimmond S.M."/>
            <person name="Teasdale R.D."/>
            <person name="Liu E.T."/>
            <person name="Brusic V."/>
            <person name="Quackenbush J."/>
            <person name="Wahlestedt C."/>
            <person name="Mattick J.S."/>
            <person name="Hume D.A."/>
            <person name="Kai C."/>
            <person name="Sasaki D."/>
            <person name="Tomaru Y."/>
            <person name="Fukuda S."/>
            <person name="Kanamori-Katayama M."/>
            <person name="Suzuki M."/>
            <person name="Aoki J."/>
            <person name="Arakawa T."/>
            <person name="Iida J."/>
            <person name="Imamura K."/>
            <person name="Itoh M."/>
            <person name="Kato T."/>
            <person name="Kawaji H."/>
            <person name="Kawagashira N."/>
            <person name="Kawashima T."/>
            <person name="Kojima M."/>
            <person name="Kondo S."/>
            <person name="Konno H."/>
            <person name="Nakano K."/>
            <person name="Ninomiya N."/>
            <person name="Nishio T."/>
            <person name="Okada M."/>
            <person name="Plessy C."/>
            <person name="Shibata K."/>
            <person name="Shiraki T."/>
            <person name="Suzuki S."/>
            <person name="Tagami M."/>
            <person name="Waki K."/>
            <person name="Watahiki A."/>
            <person name="Okamura-Oho Y."/>
            <person name="Suzuki H."/>
            <person name="Kawai J."/>
            <person name="Hayashizaki Y."/>
        </authorList>
    </citation>
    <scope>NUCLEOTIDE SEQUENCE [LARGE SCALE MRNA] (ISOFORM 2)</scope>
    <source>
        <strain>C57BL/6J</strain>
        <tissue>Testis</tissue>
    </source>
</reference>
<reference key="2">
    <citation type="journal article" date="2009" name="PLoS Biol.">
        <title>Lineage-specific biology revealed by a finished genome assembly of the mouse.</title>
        <authorList>
            <person name="Church D.M."/>
            <person name="Goodstadt L."/>
            <person name="Hillier L.W."/>
            <person name="Zody M.C."/>
            <person name="Goldstein S."/>
            <person name="She X."/>
            <person name="Bult C.J."/>
            <person name="Agarwala R."/>
            <person name="Cherry J.L."/>
            <person name="DiCuccio M."/>
            <person name="Hlavina W."/>
            <person name="Kapustin Y."/>
            <person name="Meric P."/>
            <person name="Maglott D."/>
            <person name="Birtle Z."/>
            <person name="Marques A.C."/>
            <person name="Graves T."/>
            <person name="Zhou S."/>
            <person name="Teague B."/>
            <person name="Potamousis K."/>
            <person name="Churas C."/>
            <person name="Place M."/>
            <person name="Herschleb J."/>
            <person name="Runnheim R."/>
            <person name="Forrest D."/>
            <person name="Amos-Landgraf J."/>
            <person name="Schwartz D.C."/>
            <person name="Cheng Z."/>
            <person name="Lindblad-Toh K."/>
            <person name="Eichler E.E."/>
            <person name="Ponting C.P."/>
        </authorList>
    </citation>
    <scope>NUCLEOTIDE SEQUENCE [LARGE SCALE GENOMIC DNA]</scope>
    <source>
        <strain>C57BL/6J</strain>
    </source>
</reference>
<reference key="3">
    <citation type="journal article" date="2004" name="Genome Res.">
        <title>The status, quality, and expansion of the NIH full-length cDNA project: the Mammalian Gene Collection (MGC).</title>
        <authorList>
            <consortium name="The MGC Project Team"/>
        </authorList>
    </citation>
    <scope>NUCLEOTIDE SEQUENCE [LARGE SCALE MRNA] (ISOFORM 1)</scope>
    <source>
        <strain>129</strain>
        <tissue>Mammary tumor</tissue>
    </source>
</reference>
<reference key="4">
    <citation type="journal article" date="2019" name="Genes Dev.">
        <title>Control of homologous recombination by the HROB-MCM8-MCM9 pathway.</title>
        <authorList>
            <person name="Hustedt N."/>
            <person name="Saito Y."/>
            <person name="Zimmermann M."/>
            <person name="Alvarez-Quilon A."/>
            <person name="Setiaputra D."/>
            <person name="Adam S."/>
            <person name="McEwan A."/>
            <person name="Yuan J.Y."/>
            <person name="Olivieri M."/>
            <person name="Zhao Y."/>
            <person name="Kanemaki M.T."/>
            <person name="Jurisicova A."/>
            <person name="Durocher D."/>
        </authorList>
    </citation>
    <scope>DISRUPTION PHENOTYPE</scope>
    <scope>INTERACTION WITH RPA1</scope>
</reference>
<organism>
    <name type="scientific">Mus musculus</name>
    <name type="common">Mouse</name>
    <dbReference type="NCBI Taxonomy" id="10090"/>
    <lineage>
        <taxon>Eukaryota</taxon>
        <taxon>Metazoa</taxon>
        <taxon>Chordata</taxon>
        <taxon>Craniata</taxon>
        <taxon>Vertebrata</taxon>
        <taxon>Euteleostomi</taxon>
        <taxon>Mammalia</taxon>
        <taxon>Eutheria</taxon>
        <taxon>Euarchontoglires</taxon>
        <taxon>Glires</taxon>
        <taxon>Rodentia</taxon>
        <taxon>Myomorpha</taxon>
        <taxon>Muroidea</taxon>
        <taxon>Muridae</taxon>
        <taxon>Murinae</taxon>
        <taxon>Mus</taxon>
        <taxon>Mus</taxon>
    </lineage>
</organism>
<name>HROB_MOUSE</name>
<dbReference type="EMBL" id="AK029811">
    <property type="protein sequence ID" value="BAC26629.1"/>
    <property type="molecule type" value="mRNA"/>
</dbReference>
<dbReference type="EMBL" id="AL954730">
    <property type="status" value="NOT_ANNOTATED_CDS"/>
    <property type="molecule type" value="Genomic_DNA"/>
</dbReference>
<dbReference type="EMBL" id="BC108338">
    <property type="protein sequence ID" value="AAI08339.1"/>
    <property type="molecule type" value="mRNA"/>
</dbReference>
<dbReference type="CCDS" id="CCDS36342.1">
    <molecule id="Q32P12-1"/>
</dbReference>
<dbReference type="RefSeq" id="NP_705772.3">
    <molecule id="Q32P12-1"/>
    <property type="nucleotide sequence ID" value="NM_153544.3"/>
</dbReference>
<dbReference type="FunCoup" id="Q32P12">
    <property type="interactions" value="296"/>
</dbReference>
<dbReference type="STRING" id="10090.ENSMUSP00000097961"/>
<dbReference type="GlyGen" id="Q32P12">
    <property type="glycosylation" value="4 sites, 1 O-linked glycan (4 sites)"/>
</dbReference>
<dbReference type="iPTMnet" id="Q32P12"/>
<dbReference type="PhosphoSitePlus" id="Q32P12"/>
<dbReference type="PaxDb" id="10090-ENSMUSP00000097961"/>
<dbReference type="PeptideAtlas" id="Q32P12"/>
<dbReference type="Antibodypedia" id="17380">
    <property type="antibodies" value="202 antibodies from 19 providers"/>
</dbReference>
<dbReference type="DNASU" id="217216"/>
<dbReference type="Ensembl" id="ENSMUST00000100392.5">
    <molecule id="Q32P12-1"/>
    <property type="protein sequence ID" value="ENSMUSP00000097961.5"/>
    <property type="gene ID" value="ENSMUSG00000034773.17"/>
</dbReference>
<dbReference type="Ensembl" id="ENSMUST00000133930.8">
    <molecule id="Q32P12-2"/>
    <property type="protein sequence ID" value="ENSMUSP00000137686.2"/>
    <property type="gene ID" value="ENSMUSG00000034773.17"/>
</dbReference>
<dbReference type="GeneID" id="217216"/>
<dbReference type="KEGG" id="mmu:217216"/>
<dbReference type="UCSC" id="uc007lqz.1">
    <molecule id="Q32P12-1"/>
    <property type="organism name" value="mouse"/>
</dbReference>
<dbReference type="AGR" id="MGI:2387601"/>
<dbReference type="CTD" id="78995"/>
<dbReference type="MGI" id="MGI:2387601">
    <property type="gene designation" value="Hrob"/>
</dbReference>
<dbReference type="VEuPathDB" id="HostDB:ENSMUSG00000034773"/>
<dbReference type="eggNOG" id="ENOG502QV5E">
    <property type="taxonomic scope" value="Eukaryota"/>
</dbReference>
<dbReference type="GeneTree" id="ENSGT00400000022305"/>
<dbReference type="HOGENOM" id="CLU_028006_0_0_1"/>
<dbReference type="InParanoid" id="Q32P12"/>
<dbReference type="OMA" id="FFCGTSN"/>
<dbReference type="OrthoDB" id="21443at2759"/>
<dbReference type="PhylomeDB" id="Q32P12"/>
<dbReference type="TreeFam" id="TF331108"/>
<dbReference type="BioGRID-ORCS" id="217216">
    <property type="hits" value="6 hits in 79 CRISPR screens"/>
</dbReference>
<dbReference type="PRO" id="PR:Q32P12"/>
<dbReference type="Proteomes" id="UP000000589">
    <property type="component" value="Chromosome 11"/>
</dbReference>
<dbReference type="RNAct" id="Q32P12">
    <property type="molecule type" value="protein"/>
</dbReference>
<dbReference type="Bgee" id="ENSMUSG00000034773">
    <property type="expression patterns" value="Expressed in animal zygote and 116 other cell types or tissues"/>
</dbReference>
<dbReference type="GO" id="GO:0005634">
    <property type="term" value="C:nucleus"/>
    <property type="evidence" value="ECO:0007669"/>
    <property type="project" value="UniProtKB-SubCell"/>
</dbReference>
<dbReference type="GO" id="GO:0090734">
    <property type="term" value="C:site of DNA damage"/>
    <property type="evidence" value="ECO:0000250"/>
    <property type="project" value="UniProtKB"/>
</dbReference>
<dbReference type="GO" id="GO:0003697">
    <property type="term" value="F:single-stranded DNA binding"/>
    <property type="evidence" value="ECO:0000314"/>
    <property type="project" value="UniProtKB"/>
</dbReference>
<dbReference type="GO" id="GO:0000731">
    <property type="term" value="P:DNA synthesis involved in DNA repair"/>
    <property type="evidence" value="ECO:0000250"/>
    <property type="project" value="UniProtKB"/>
</dbReference>
<dbReference type="GO" id="GO:0007292">
    <property type="term" value="P:female gamete generation"/>
    <property type="evidence" value="ECO:0000315"/>
    <property type="project" value="UniProtKB"/>
</dbReference>
<dbReference type="GO" id="GO:0036297">
    <property type="term" value="P:interstrand cross-link repair"/>
    <property type="evidence" value="ECO:0000250"/>
    <property type="project" value="UniProtKB"/>
</dbReference>
<dbReference type="GO" id="GO:0048232">
    <property type="term" value="P:male gamete generation"/>
    <property type="evidence" value="ECO:0000315"/>
    <property type="project" value="UniProtKB"/>
</dbReference>
<dbReference type="GO" id="GO:0000725">
    <property type="term" value="P:recombinational repair"/>
    <property type="evidence" value="ECO:0007669"/>
    <property type="project" value="InterPro"/>
</dbReference>
<dbReference type="InterPro" id="IPR028045">
    <property type="entry name" value="HROB"/>
</dbReference>
<dbReference type="PANTHER" id="PTHR14523:SF1">
    <property type="entry name" value="HOMOLOGOUS RECOMBINATION OB-FOLD PROTEIN"/>
    <property type="match status" value="1"/>
</dbReference>
<dbReference type="PANTHER" id="PTHR14523">
    <property type="entry name" value="UNCHARACTERIZED PROTEIN C17ORF53 HOMOLOG"/>
    <property type="match status" value="1"/>
</dbReference>
<dbReference type="Pfam" id="PF15072">
    <property type="entry name" value="HROB"/>
    <property type="match status" value="1"/>
</dbReference>
<accession>Q32P12</accession>
<accession>A2AWS8</accession>
<accession>Q8CDN3</accession>
<keyword id="KW-0025">Alternative splicing</keyword>
<keyword id="KW-0158">Chromosome</keyword>
<keyword id="KW-0227">DNA damage</keyword>
<keyword id="KW-0233">DNA recombination</keyword>
<keyword id="KW-0234">DNA repair</keyword>
<keyword id="KW-0237">DNA synthesis</keyword>
<keyword id="KW-0238">DNA-binding</keyword>
<keyword id="KW-0488">Methylation</keyword>
<keyword id="KW-0539">Nucleus</keyword>
<keyword id="KW-0597">Phosphoprotein</keyword>
<keyword id="KW-1185">Reference proteome</keyword>
<comment type="function">
    <text evidence="1">DNA-binding protein involved in homologous recombination that acts by recruiting the MCM8-MCM9 helicase complex to sites of DNA damage to promote DNA repair synthesis.</text>
</comment>
<comment type="subunit">
    <text evidence="1 3">Interacts with MCM8; this interaction is necessary for MCM8-MCM9 helicase complex recruitment to DNA damage sites (By similarity). Interacts with RPA1; this interaction associates HROB with the RPA complex (PubMed:31467087).</text>
</comment>
<comment type="subcellular location">
    <subcellularLocation>
        <location evidence="1">Nucleus</location>
    </subcellularLocation>
    <subcellularLocation>
        <location evidence="1">Chromosome</location>
    </subcellularLocation>
    <text evidence="1">Localized to the sites of DNA damage.</text>
</comment>
<comment type="alternative products">
    <event type="alternative splicing"/>
    <isoform>
        <id>Q32P12-1</id>
        <name>1</name>
        <sequence type="displayed"/>
    </isoform>
    <isoform>
        <id>Q32P12-2</id>
        <name>2</name>
        <sequence type="described" ref="VSP_025656"/>
    </isoform>
</comment>
<comment type="disruption phenotype">
    <text evidence="3">Deficient female and male mice exhibit infertility associated with impaired ovarian development and arrested male meiosis.</text>
</comment>
<gene>
    <name evidence="7" type="primary">Hrob</name>
</gene>
<evidence type="ECO:0000250" key="1">
    <source>
        <dbReference type="UniProtKB" id="Q8N3J3"/>
    </source>
</evidence>
<evidence type="ECO:0000256" key="2">
    <source>
        <dbReference type="SAM" id="MobiDB-lite"/>
    </source>
</evidence>
<evidence type="ECO:0000269" key="3">
    <source>
    </source>
</evidence>
<evidence type="ECO:0000303" key="4">
    <source>
    </source>
</evidence>
<evidence type="ECO:0000303" key="5">
    <source>
    </source>
</evidence>
<evidence type="ECO:0000305" key="6"/>
<evidence type="ECO:0000312" key="7">
    <source>
        <dbReference type="MGI" id="MGI:2387601"/>
    </source>
</evidence>